<keyword id="KW-0002">3D-structure</keyword>
<keyword id="KW-0007">Acetylation</keyword>
<keyword id="KW-0009">Actin-binding</keyword>
<keyword id="KW-0106">Calcium</keyword>
<keyword id="KW-0479">Metal-binding</keyword>
<keyword id="KW-1267">Proteomics identification</keyword>
<keyword id="KW-1185">Reference proteome</keyword>
<keyword id="KW-0677">Repeat</keyword>
<sequence length="901" mass="103241">MMMVMQPEGLGAGEGRFAGGGGGGEYMEQEEDWDRDLLLDPAWEKQQRKTFTAWCNSHLRKAGTQIENIEEDFRNGLKLMLLLEVISGERLPRPDKGKMRFHKIANVNKALDFIASKGVKLVSIGAEEIVDGNLKMTLGMIWTIILRFAIQDISVEETSAKEGLLLWCQRKTAPYRNVNVQNFHTSWKDGLALCALIHRHRPDLIDYAKLRKDDPIGNLNTAFEVAEKYLDIPKMLDAEDIVNTPKPDEKAIMTYVSCFYHAFAGAEQAETAANRICKVLAVNQENEKLMEEYEKLASELLEWIRRTVPWLENRVGEPSMSAMQRKLEDFRDYRRLHKPPRIQEKCQLEINFNTLQTKLRLSHRPAFMPSEGKLVSDIANAWRGLEQVEKGYEDWLLSEIRRLQRLQHLAEKFRQKASLHEAWTRGKEEMLSQRDYDSALLQEVRALLRRHEAFESDLAAHQDRVEHIAALAQELNELDYHEAASVNSRCQAICDQWDNLGTLTQKRRDALERMEKLLETIDRLQLEFARRAAPFNNWLDGAVEDLQDVWLVHSVEETQSLLTAHDQFKATLPEADRERGAIMGIQGEIQKICQTYGLRPCSTNPYITLSPQDINTKWDMVRKLVPSCDQTLQEELARQQVNERLRRQFAAQANAIGPWIQAKVEEVGRLAAGLAGSLEEQMAGLRQQEQNIINYKTNIDRLEGDHQLLQESLVFDNKHTVYSMEHIRVGWEQLLTSIARTINEVENQVLTRDAKGLSQEQLNEFRASFNHFDRKQNGMMEPDDFRACLISMGYDLGEVEFARIMTMVDPNAAGVVTFQAFIDFMTRETAETDTTEQVVASFKILAGDKNYITPEELRRELPAKQAEYCIRRMVPYKGSGAPAGALDYVAFSSALYGESDL</sequence>
<evidence type="ECO:0000255" key="1">
    <source>
        <dbReference type="PROSITE-ProRule" id="PRU00044"/>
    </source>
</evidence>
<evidence type="ECO:0000255" key="2">
    <source>
        <dbReference type="PROSITE-ProRule" id="PRU00448"/>
    </source>
</evidence>
<evidence type="ECO:0000269" key="3">
    <source>
    </source>
</evidence>
<evidence type="ECO:0000269" key="4">
    <source>
    </source>
</evidence>
<evidence type="ECO:0000269" key="5">
    <source>
    </source>
</evidence>
<evidence type="ECO:0000269" key="6">
    <source>
    </source>
</evidence>
<evidence type="ECO:0000269" key="7">
    <source>
    </source>
</evidence>
<evidence type="ECO:0000269" key="8">
    <source>
    </source>
</evidence>
<evidence type="ECO:0000269" key="9">
    <source>
    </source>
</evidence>
<evidence type="ECO:0000269" key="10">
    <source>
    </source>
</evidence>
<evidence type="ECO:0000269" key="11">
    <source>
    </source>
</evidence>
<evidence type="ECO:0000269" key="12">
    <source>
    </source>
</evidence>
<evidence type="ECO:0000305" key="13"/>
<evidence type="ECO:0007744" key="14">
    <source>
    </source>
</evidence>
<evidence type="ECO:0007829" key="15">
    <source>
        <dbReference type="PDB" id="1TJT"/>
    </source>
</evidence>
<evidence type="ECO:0007829" key="16">
    <source>
        <dbReference type="PDB" id="1WKU"/>
    </source>
</evidence>
<reference key="1">
    <citation type="journal article" date="1992" name="J. Biol. Chem.">
        <title>Cloning and characterization of two human skeletal muscle alpha-actinin genes located on chromosomes 1 and 11.</title>
        <authorList>
            <person name="Beggs A.H."/>
            <person name="Byers T.J."/>
            <person name="Knoll J.H.M."/>
            <person name="Boyce F.M."/>
            <person name="Bruns G.A.P."/>
            <person name="Kunkel L.M."/>
        </authorList>
    </citation>
    <scope>NUCLEOTIDE SEQUENCE [MRNA]</scope>
    <scope>VARIANTS GLN-523; ARG-628 AND ARG-776</scope>
    <source>
        <tissue>Skeletal muscle</tissue>
    </source>
</reference>
<reference key="2">
    <citation type="journal article" date="2006" name="Nature">
        <title>Human chromosome 11 DNA sequence and analysis including novel gene identification.</title>
        <authorList>
            <person name="Taylor T.D."/>
            <person name="Noguchi H."/>
            <person name="Totoki Y."/>
            <person name="Toyoda A."/>
            <person name="Kuroki Y."/>
            <person name="Dewar K."/>
            <person name="Lloyd C."/>
            <person name="Itoh T."/>
            <person name="Takeda T."/>
            <person name="Kim D.-W."/>
            <person name="She X."/>
            <person name="Barlow K.F."/>
            <person name="Bloom T."/>
            <person name="Bruford E."/>
            <person name="Chang J.L."/>
            <person name="Cuomo C.A."/>
            <person name="Eichler E."/>
            <person name="FitzGerald M.G."/>
            <person name="Jaffe D.B."/>
            <person name="LaButti K."/>
            <person name="Nicol R."/>
            <person name="Park H.-S."/>
            <person name="Seaman C."/>
            <person name="Sougnez C."/>
            <person name="Yang X."/>
            <person name="Zimmer A.R."/>
            <person name="Zody M.C."/>
            <person name="Birren B.W."/>
            <person name="Nusbaum C."/>
            <person name="Fujiyama A."/>
            <person name="Hattori M."/>
            <person name="Rogers J."/>
            <person name="Lander E.S."/>
            <person name="Sakaki Y."/>
        </authorList>
    </citation>
    <scope>NUCLEOTIDE SEQUENCE [LARGE SCALE GENOMIC DNA]</scope>
</reference>
<reference key="3">
    <citation type="journal article" date="2004" name="Genome Res.">
        <title>The status, quality, and expansion of the NIH full-length cDNA project: the Mammalian Gene Collection (MGC).</title>
        <authorList>
            <consortium name="The MGC Project Team"/>
        </authorList>
    </citation>
    <scope>NUCLEOTIDE SEQUENCE [LARGE SCALE MRNA]</scope>
    <scope>VARIANTS GLN-523; ARG-628 AND ARG-776</scope>
</reference>
<reference key="4">
    <citation type="journal article" date="2001" name="Hum. Mol. Genet.">
        <title>Differential expression of the actin-binding proteins, alpha-actinin-2 and -3, in different species: implications for the evolution of functional redundancy.</title>
        <authorList>
            <person name="Mills M."/>
            <person name="Yang N."/>
            <person name="Weinberger R."/>
            <person name="Vander Woude D.L."/>
            <person name="Beggs A.H."/>
            <person name="Easteal S."/>
            <person name="North K.N."/>
        </authorList>
    </citation>
    <scope>TISSUE SPECIFICITY</scope>
    <scope>POLYMORPHISM</scope>
</reference>
<reference key="5">
    <citation type="journal article" date="2001" name="Proc. Natl. Acad. Sci. U.S.A.">
        <title>Myozenin: an alpha-actinin- and gamma-filamin-binding protein of skeletal muscle Z lines.</title>
        <authorList>
            <person name="Takada F."/>
            <person name="Vander Woude D.L."/>
            <person name="Tong H.-Q."/>
            <person name="Thompson T.G."/>
            <person name="Watkins S.C."/>
            <person name="Kunkel L.M."/>
            <person name="Beggs A.H."/>
        </authorList>
    </citation>
    <scope>INTERACTION WITH MYOZ1</scope>
</reference>
<reference key="6">
    <citation type="journal article" date="2003" name="Am. J. Hum. Genet.">
        <title>ACTN3 genotype is associated with human elite athletic performance.</title>
        <authorList>
            <person name="Yang N."/>
            <person name="MacArthur D.G."/>
            <person name="Gulbin J.P."/>
            <person name="Hahn A.G."/>
            <person name="Beggs A.H."/>
            <person name="Easteal S."/>
            <person name="North K."/>
        </authorList>
    </citation>
    <scope>POLYMORPHISM</scope>
</reference>
<reference key="7">
    <citation type="journal article" date="2005" name="Eur. J. Hum. Genet.">
        <title>Mitochondrial DNA and ACTN3 genotypes in Finnish elite endurance and sprint athletes.</title>
        <authorList>
            <person name="Niemi A.K."/>
            <person name="Majamaa K."/>
        </authorList>
    </citation>
    <scope>POLYMORPHISM</scope>
</reference>
<reference key="8">
    <citation type="journal article" date="2008" name="Eur. J. Hum. Genet.">
        <title>The ACTN3 R577X nonsense allele is under-represented in elite-level strength athletes.</title>
        <authorList>
            <person name="Roth S.M."/>
            <person name="Walsh S."/>
            <person name="Liu D."/>
            <person name="Metter E.J."/>
            <person name="Ferrucci L."/>
            <person name="Hurley B.F."/>
        </authorList>
    </citation>
    <scope>POLYMORPHISM</scope>
</reference>
<reference key="9">
    <citation type="journal article" date="2012" name="Mol. Cell. Proteomics">
        <title>Comparative large-scale characterisation of plant vs. mammal proteins reveals similar and idiosyncratic N-alpha acetylation features.</title>
        <authorList>
            <person name="Bienvenut W.V."/>
            <person name="Sumpton D."/>
            <person name="Martinez A."/>
            <person name="Lilla S."/>
            <person name="Espagne C."/>
            <person name="Meinnel T."/>
            <person name="Giglione C."/>
        </authorList>
    </citation>
    <scope>ACETYLATION [LARGE SCALE ANALYSIS] AT MET-1</scope>
    <scope>IDENTIFICATION BY MASS SPECTROMETRY [LARGE SCALE ANALYSIS]</scope>
</reference>
<reference key="10">
    <citation type="journal article" date="2018" name="Am. J. Hum. Genet.">
        <title>The effect of ACTN3 gene doping on skeletal muscle performance.</title>
        <authorList>
            <person name="Garton F.C."/>
            <person name="Houweling P.J."/>
            <person name="Vukcevic D."/>
            <person name="Meehan L.R."/>
            <person name="Lee F.X.Z."/>
            <person name="Lek M."/>
            <person name="Roeszler K.N."/>
            <person name="Hogarth M.W."/>
            <person name="Tiong C.F."/>
            <person name="Zannino D."/>
            <person name="Yang N."/>
            <person name="Leslie S."/>
            <person name="Gregorevic P."/>
            <person name="Head S.I."/>
            <person name="Seto J.T."/>
            <person name="North K.N."/>
        </authorList>
    </citation>
    <scope>POLYMORPHISM</scope>
</reference>
<reference key="11">
    <citation type="journal article" date="2005" name="J. Mol. Biol.">
        <title>The crystal structure of the actin binding domain from alpha-actinin in its closed conformation: structural insight into phospholipid regulation of alpha-actinin.</title>
        <authorList>
            <person name="Franzot G."/>
            <person name="Sjoblom B."/>
            <person name="Gautel M."/>
            <person name="Djinovic Carugo K."/>
        </authorList>
    </citation>
    <scope>X-RAY CRYSTALLOGRAPHY (1.6 ANGSTROMS) OF 26-273</scope>
</reference>
<reference key="12">
    <citation type="journal article" date="1999" name="Nat. Genet.">
        <title>A common nonsense mutation results in alpha-actinin-3 deficiency in the general population.</title>
        <authorList>
            <person name="North K.N."/>
            <person name="Yang N."/>
            <person name="Wattanasirichaigoon D."/>
            <person name="Mills M."/>
            <person name="Easteal S."/>
            <person name="Beggs A.H."/>
        </authorList>
    </citation>
    <scope>VARIANTS GLN-523 AND 577-ARG--LEU-901 DEL</scope>
    <scope>POLYMORPHISM</scope>
    <scope>TISSUE SPECIFICITY</scope>
</reference>
<reference key="13">
    <citation type="journal article" date="2021" name="Am. J. Hum. Genet.">
        <title>Loss of alpha-actinin-3 during human evolution provides superior cold resilience and muscle heat generation.</title>
        <authorList>
            <person name="Wyckelsma V.L."/>
            <person name="Venckunas T."/>
            <person name="Houweling P.J."/>
            <person name="Schlittler M."/>
            <person name="Lauschke V.M."/>
            <person name="Tiong C.F."/>
            <person name="Wood H.D."/>
            <person name="Ivarsson N."/>
            <person name="Paulauskas H."/>
            <person name="Eimantas N."/>
            <person name="Andersson D.C."/>
            <person name="North K.N."/>
            <person name="Brazaitis M."/>
            <person name="Westerblad H."/>
        </authorList>
    </citation>
    <scope>VARIANT 577-ARG--LEU-901 DEL</scope>
    <scope>POLYMORPHISM</scope>
</reference>
<feature type="chain" id="PRO_0000073438" description="Alpha-actinin-3">
    <location>
        <begin position="1"/>
        <end position="901"/>
    </location>
</feature>
<feature type="domain" description="Calponin-homology (CH) 1" evidence="1">
    <location>
        <begin position="45"/>
        <end position="149"/>
    </location>
</feature>
<feature type="domain" description="Calponin-homology (CH) 2" evidence="1">
    <location>
        <begin position="158"/>
        <end position="264"/>
    </location>
</feature>
<feature type="repeat" description="Spectrin 1">
    <location>
        <begin position="288"/>
        <end position="398"/>
    </location>
</feature>
<feature type="repeat" description="Spectrin 2">
    <location>
        <begin position="408"/>
        <end position="513"/>
    </location>
</feature>
<feature type="repeat" description="Spectrin 3">
    <location>
        <begin position="523"/>
        <end position="634"/>
    </location>
</feature>
<feature type="repeat" description="Spectrin 4">
    <location>
        <begin position="644"/>
        <end position="747"/>
    </location>
</feature>
<feature type="domain" description="EF-hand 1" evidence="2">
    <location>
        <begin position="760"/>
        <end position="795"/>
    </location>
</feature>
<feature type="domain" description="EF-hand 2" evidence="2">
    <location>
        <begin position="796"/>
        <end position="831"/>
    </location>
</feature>
<feature type="region of interest" description="Actin-binding">
    <location>
        <begin position="1"/>
        <end position="261"/>
    </location>
</feature>
<feature type="binding site" evidence="13">
    <location>
        <position position="773"/>
    </location>
    <ligand>
        <name>Ca(2+)</name>
        <dbReference type="ChEBI" id="CHEBI:29108"/>
        <label>1</label>
    </ligand>
</feature>
<feature type="binding site" evidence="13">
    <location>
        <position position="777"/>
    </location>
    <ligand>
        <name>Ca(2+)</name>
        <dbReference type="ChEBI" id="CHEBI:29108"/>
        <label>1</label>
    </ligand>
</feature>
<feature type="binding site" evidence="13">
    <location>
        <position position="779"/>
    </location>
    <ligand>
        <name>Ca(2+)</name>
        <dbReference type="ChEBI" id="CHEBI:29108"/>
        <label>1</label>
    </ligand>
</feature>
<feature type="binding site" evidence="13">
    <location>
        <position position="784"/>
    </location>
    <ligand>
        <name>Ca(2+)</name>
        <dbReference type="ChEBI" id="CHEBI:29108"/>
        <label>1</label>
    </ligand>
</feature>
<feature type="binding site" evidence="13">
    <location>
        <position position="809"/>
    </location>
    <ligand>
        <name>Ca(2+)</name>
        <dbReference type="ChEBI" id="CHEBI:29108"/>
        <label>2</label>
    </ligand>
</feature>
<feature type="binding site" evidence="13">
    <location>
        <position position="811"/>
    </location>
    <ligand>
        <name>Ca(2+)</name>
        <dbReference type="ChEBI" id="CHEBI:29108"/>
        <label>2</label>
    </ligand>
</feature>
<feature type="modified residue" description="N-acetylmethionine" evidence="14">
    <location>
        <position position="1"/>
    </location>
</feature>
<feature type="sequence variant" id="VAR_012705" description="In dbSNP:rs1671064." evidence="3 7 8">
    <original>R</original>
    <variation>Q</variation>
    <location>
        <position position="523"/>
    </location>
</feature>
<feature type="sequence variant" id="VAR_080044" description="Very low expression, if any, at the protein level in skeletal muscle; dbSNP:rs1815739." evidence="3 12">
    <location>
        <begin position="577"/>
        <end position="901"/>
    </location>
</feature>
<feature type="sequence variant" id="VAR_047528" description="In dbSNP:rs618838." evidence="7 8">
    <original>C</original>
    <variation>R</variation>
    <location>
        <position position="628"/>
    </location>
</feature>
<feature type="sequence variant" id="VAR_033488" description="In dbSNP:rs2229456.">
    <original>E</original>
    <variation>A</variation>
    <location>
        <position position="635"/>
    </location>
</feature>
<feature type="sequence variant" id="VAR_047529" description="In dbSNP:rs540874." evidence="7 8">
    <original>Q</original>
    <variation>R</variation>
    <location>
        <position position="776"/>
    </location>
</feature>
<feature type="helix" evidence="16">
    <location>
        <begin position="43"/>
        <end position="59"/>
    </location>
</feature>
<feature type="helix" evidence="16">
    <location>
        <begin position="60"/>
        <end position="62"/>
    </location>
</feature>
<feature type="turn" evidence="16">
    <location>
        <begin position="69"/>
        <end position="75"/>
    </location>
</feature>
<feature type="helix" evidence="16">
    <location>
        <begin position="77"/>
        <end position="87"/>
    </location>
</feature>
<feature type="helix" evidence="16">
    <location>
        <begin position="100"/>
        <end position="115"/>
    </location>
</feature>
<feature type="turn" evidence="16">
    <location>
        <begin position="116"/>
        <end position="118"/>
    </location>
</feature>
<feature type="helix" evidence="16">
    <location>
        <begin position="126"/>
        <end position="131"/>
    </location>
</feature>
<feature type="helix" evidence="16">
    <location>
        <begin position="134"/>
        <end position="149"/>
    </location>
</feature>
<feature type="turn" evidence="16">
    <location>
        <begin position="150"/>
        <end position="152"/>
    </location>
</feature>
<feature type="helix" evidence="16">
    <location>
        <begin position="160"/>
        <end position="172"/>
    </location>
</feature>
<feature type="strand" evidence="16">
    <location>
        <begin position="182"/>
        <end position="184"/>
    </location>
</feature>
<feature type="helix" evidence="16">
    <location>
        <begin position="185"/>
        <end position="187"/>
    </location>
</feature>
<feature type="helix" evidence="16">
    <location>
        <begin position="191"/>
        <end position="200"/>
    </location>
</feature>
<feature type="turn" evidence="15">
    <location>
        <begin position="202"/>
        <end position="204"/>
    </location>
</feature>
<feature type="helix" evidence="16">
    <location>
        <begin position="207"/>
        <end position="209"/>
    </location>
</feature>
<feature type="helix" evidence="16">
    <location>
        <begin position="215"/>
        <end position="229"/>
    </location>
</feature>
<feature type="helix" evidence="16">
    <location>
        <begin position="238"/>
        <end position="243"/>
    </location>
</feature>
<feature type="strand" evidence="16">
    <location>
        <begin position="244"/>
        <end position="246"/>
    </location>
</feature>
<feature type="helix" evidence="16">
    <location>
        <begin position="249"/>
        <end position="265"/>
    </location>
</feature>
<accession>Q08043</accession>
<accession>A6NP77</accession>
<accession>Q4KKV2</accession>
<name>ACTN3_HUMAN</name>
<comment type="function">
    <text>F-actin cross-linking protein which is thought to anchor actin to a variety of intracellular structures. This is a bundling protein.</text>
</comment>
<comment type="subunit">
    <text evidence="4">Homodimer; antiparallel. Also forms heterodimers with ACTN2. Interacts with MYOZ1.</text>
</comment>
<comment type="interaction">
    <interactant intactId="EBI-2880652">
        <id>Q08043</id>
    </interactant>
    <interactant intactId="EBI-351710">
        <id>P12814</id>
        <label>ACTN1</label>
    </interactant>
    <organismsDiffer>false</organismsDiffer>
    <experiments>3</experiments>
</comment>
<comment type="interaction">
    <interactant intactId="EBI-2880652">
        <id>Q08043</id>
    </interactant>
    <interactant intactId="EBI-2880652">
        <id>Q08043</id>
        <label>ACTN3</label>
    </interactant>
    <organismsDiffer>false</organismsDiffer>
    <experiments>3</experiments>
</comment>
<comment type="interaction">
    <interactant intactId="EBI-2880652">
        <id>Q08043</id>
    </interactant>
    <interactant intactId="EBI-351526">
        <id>O43707</id>
        <label>ACTN4</label>
    </interactant>
    <organismsDiffer>false</organismsDiffer>
    <experiments>3</experiments>
</comment>
<comment type="interaction">
    <interactant intactId="EBI-2880652">
        <id>Q08043</id>
    </interactant>
    <interactant intactId="EBI-745641">
        <id>Q96DX5</id>
        <label>ASB9</label>
    </interactant>
    <organismsDiffer>false</organismsDiffer>
    <experiments>3</experiments>
</comment>
<comment type="interaction">
    <interactant intactId="EBI-2880652">
        <id>Q08043</id>
    </interactant>
    <interactant intactId="EBI-12811889">
        <id>Q9Y6H3</id>
        <label>ATP23</label>
    </interactant>
    <organismsDiffer>false</organismsDiffer>
    <experiments>3</experiments>
</comment>
<comment type="interaction">
    <interactant intactId="EBI-2880652">
        <id>Q08043</id>
    </interactant>
    <interactant intactId="EBI-739879">
        <id>Q53TS8</id>
        <label>C2CD6</label>
    </interactant>
    <organismsDiffer>false</organismsDiffer>
    <experiments>3</experiments>
</comment>
<comment type="interaction">
    <interactant intactId="EBI-2880652">
        <id>Q08043</id>
    </interactant>
    <interactant intactId="EBI-10179719">
        <id>A2RRN7</id>
        <label>CADPS</label>
    </interactant>
    <organismsDiffer>false</organismsDiffer>
    <experiments>3</experiments>
</comment>
<comment type="interaction">
    <interactant intactId="EBI-2880652">
        <id>Q08043</id>
    </interactant>
    <interactant intactId="EBI-12010090">
        <id>A8MYP8</id>
        <label>CIMAP1B</label>
    </interactant>
    <organismsDiffer>false</organismsDiffer>
    <experiments>3</experiments>
</comment>
<comment type="interaction">
    <interactant intactId="EBI-2880652">
        <id>Q08043</id>
    </interactant>
    <interactant intactId="EBI-12155483">
        <id>Q9H1P6</id>
        <label>CIMIP1</label>
    </interactant>
    <organismsDiffer>false</organismsDiffer>
    <experiments>3</experiments>
</comment>
<comment type="interaction">
    <interactant intactId="EBI-2880652">
        <id>Q08043</id>
    </interactant>
    <interactant intactId="EBI-1188472">
        <id>P78358</id>
        <label>CTAG1B</label>
    </interactant>
    <organismsDiffer>false</organismsDiffer>
    <experiments>5</experiments>
</comment>
<comment type="interaction">
    <interactant intactId="EBI-2880652">
        <id>Q08043</id>
    </interactant>
    <interactant intactId="EBI-751587">
        <id>Q9GZU7</id>
        <label>CTDSP1</label>
    </interactant>
    <organismsDiffer>false</organismsDiffer>
    <experiments>3</experiments>
</comment>
<comment type="interaction">
    <interactant intactId="EBI-2880652">
        <id>Q08043</id>
    </interactant>
    <interactant intactId="EBI-12175919">
        <id>P42830</id>
        <label>CXCL5</label>
    </interactant>
    <organismsDiffer>false</organismsDiffer>
    <experiments>3</experiments>
</comment>
<comment type="interaction">
    <interactant intactId="EBI-2880652">
        <id>Q08043</id>
    </interactant>
    <interactant intactId="EBI-749139">
        <id>O95865</id>
        <label>DDAH2</label>
    </interactant>
    <organismsDiffer>false</organismsDiffer>
    <experiments>3</experiments>
</comment>
<comment type="interaction">
    <interactant intactId="EBI-2880652">
        <id>Q08043</id>
    </interactant>
    <interactant intactId="EBI-947964">
        <id>Q16610</id>
        <label>ECM1</label>
    </interactant>
    <organismsDiffer>false</organismsDiffer>
    <experiments>3</experiments>
</comment>
<comment type="interaction">
    <interactant intactId="EBI-2880652">
        <id>Q08043</id>
    </interactant>
    <interactant intactId="EBI-6658203">
        <id>Q86YD7</id>
        <label>FAM90A1</label>
    </interactant>
    <organismsDiffer>false</organismsDiffer>
    <experiments>3</experiments>
</comment>
<comment type="interaction">
    <interactant intactId="EBI-2880652">
        <id>Q08043</id>
    </interactant>
    <interactant intactId="EBI-7251368">
        <id>Q9BZE0</id>
        <label>GLIS2</label>
    </interactant>
    <organismsDiffer>false</organismsDiffer>
    <experiments>3</experiments>
</comment>
<comment type="interaction">
    <interactant intactId="EBI-2880652">
        <id>Q08043</id>
    </interactant>
    <interactant intactId="EBI-740220">
        <id>O14964</id>
        <label>HGS</label>
    </interactant>
    <organismsDiffer>false</organismsDiffer>
    <experiments>3</experiments>
</comment>
<comment type="interaction">
    <interactant intactId="EBI-2880652">
        <id>Q08043</id>
    </interactant>
    <interactant intactId="EBI-17244356">
        <id>P35452-2</id>
        <label>HOXD12</label>
    </interactant>
    <organismsDiffer>false</organismsDiffer>
    <experiments>3</experiments>
</comment>
<comment type="interaction">
    <interactant intactId="EBI-2880652">
        <id>Q08043</id>
    </interactant>
    <interactant intactId="EBI-7116203">
        <id>O75031</id>
        <label>HSF2BP</label>
    </interactant>
    <organismsDiffer>false</organismsDiffer>
    <experiments>3</experiments>
</comment>
<comment type="interaction">
    <interactant intactId="EBI-2880652">
        <id>Q08043</id>
    </interactant>
    <interactant intactId="EBI-2866408">
        <id>P26440</id>
        <label>IVD</label>
    </interactant>
    <organismsDiffer>false</organismsDiffer>
    <experiments>3</experiments>
</comment>
<comment type="interaction">
    <interactant intactId="EBI-2880652">
        <id>Q08043</id>
    </interactant>
    <interactant intactId="EBI-2564105">
        <id>P48668</id>
        <label>KRT6C</label>
    </interactant>
    <organismsDiffer>false</organismsDiffer>
    <experiments>3</experiments>
</comment>
<comment type="interaction">
    <interactant intactId="EBI-2880652">
        <id>Q08043</id>
    </interactant>
    <interactant intactId="EBI-12039345">
        <id>Q9UBR4-2</id>
        <label>LHX3</label>
    </interactant>
    <organismsDiffer>false</organismsDiffer>
    <experiments>5</experiments>
</comment>
<comment type="interaction">
    <interactant intactId="EBI-2880652">
        <id>Q08043</id>
    </interactant>
    <interactant intactId="EBI-739832">
        <id>Q8TBB1</id>
        <label>LNX1</label>
    </interactant>
    <organismsDiffer>false</organismsDiffer>
    <experiments>3</experiments>
</comment>
<comment type="interaction">
    <interactant intactId="EBI-2880652">
        <id>Q08043</id>
    </interactant>
    <interactant intactId="EBI-1045155">
        <id>P43360</id>
        <label>MAGEA6</label>
    </interactant>
    <organismsDiffer>false</organismsDiffer>
    <experiments>3</experiments>
</comment>
<comment type="interaction">
    <interactant intactId="EBI-2880652">
        <id>Q08043</id>
    </interactant>
    <interactant intactId="EBI-2555563">
        <id>Q8IY33</id>
        <label>MICALL2</label>
    </interactant>
    <organismsDiffer>false</organismsDiffer>
    <experiments>3</experiments>
</comment>
<comment type="interaction">
    <interactant intactId="EBI-2880652">
        <id>Q08043</id>
    </interactant>
    <interactant intactId="EBI-296701">
        <id>Q9UBF9</id>
        <label>MYOT</label>
    </interactant>
    <organismsDiffer>false</organismsDiffer>
    <experiments>3</experiments>
</comment>
<comment type="interaction">
    <interactant intactId="EBI-2880652">
        <id>Q08043</id>
    </interactant>
    <interactant intactId="EBI-744402">
        <id>Q9NP98</id>
        <label>MYOZ1</label>
    </interactant>
    <organismsDiffer>false</organismsDiffer>
    <experiments>3</experiments>
</comment>
<comment type="interaction">
    <interactant intactId="EBI-2880652">
        <id>Q08043</id>
    </interactant>
    <interactant intactId="EBI-1246261">
        <id>O14561</id>
        <label>NDUFAB1</label>
    </interactant>
    <organismsDiffer>false</organismsDiffer>
    <experiments>3</experiments>
</comment>
<comment type="interaction">
    <interactant intactId="EBI-2880652">
        <id>Q08043</id>
    </interactant>
    <interactant intactId="EBI-3920396">
        <id>Q6ZUT1</id>
        <label>NKAPD1</label>
    </interactant>
    <organismsDiffer>false</organismsDiffer>
    <experiments>3</experiments>
</comment>
<comment type="interaction">
    <interactant intactId="EBI-2880652">
        <id>Q08043</id>
    </interactant>
    <interactant intactId="EBI-1371908">
        <id>P05166</id>
        <label>PCCB</label>
    </interactant>
    <organismsDiffer>false</organismsDiffer>
    <experiments>3</experiments>
</comment>
<comment type="interaction">
    <interactant intactId="EBI-2880652">
        <id>Q08043</id>
    </interactant>
    <interactant intactId="EBI-10987518">
        <id>Q99959-2</id>
        <label>PKP2</label>
    </interactant>
    <organismsDiffer>false</organismsDiffer>
    <experiments>3</experiments>
</comment>
<comment type="interaction">
    <interactant intactId="EBI-2880652">
        <id>Q08043</id>
    </interactant>
    <interactant intactId="EBI-12029004">
        <id>P78424</id>
        <label>POU6F2</label>
    </interactant>
    <organismsDiffer>false</organismsDiffer>
    <experiments>3</experiments>
</comment>
<comment type="interaction">
    <interactant intactId="EBI-2880652">
        <id>Q08043</id>
    </interactant>
    <interactant intactId="EBI-2557469">
        <id>Q6NYC8</id>
        <label>PPP1R18</label>
    </interactant>
    <organismsDiffer>false</organismsDiffer>
    <experiments>3</experiments>
</comment>
<comment type="interaction">
    <interactant intactId="EBI-2880652">
        <id>Q08043</id>
    </interactant>
    <interactant intactId="EBI-1383632">
        <id>Q13882</id>
        <label>PTK6</label>
    </interactant>
    <organismsDiffer>false</organismsDiffer>
    <experiments>3</experiments>
</comment>
<comment type="interaction">
    <interactant intactId="EBI-2880652">
        <id>Q08043</id>
    </interactant>
    <interactant intactId="EBI-10217913">
        <id>Q14D33</id>
        <label>RTP5</label>
    </interactant>
    <organismsDiffer>false</organismsDiffer>
    <experiments>3</experiments>
</comment>
<comment type="interaction">
    <interactant intactId="EBI-2880652">
        <id>Q08043</id>
    </interactant>
    <interactant intactId="EBI-1045459">
        <id>O95863</id>
        <label>SNAI1</label>
    </interactant>
    <organismsDiffer>false</organismsDiffer>
    <experiments>3</experiments>
</comment>
<comment type="interaction">
    <interactant intactId="EBI-2880652">
        <id>Q08043</id>
    </interactant>
    <interactant intactId="EBI-12288855">
        <id>Q5JUK2</id>
        <label>SOHLH1</label>
    </interactant>
    <organismsDiffer>false</organismsDiffer>
    <experiments>3</experiments>
</comment>
<comment type="interaction">
    <interactant intactId="EBI-2880652">
        <id>Q08043</id>
    </interactant>
    <interactant intactId="EBI-12082116">
        <id>Q9H987-2</id>
        <label>SYNPO2L</label>
    </interactant>
    <organismsDiffer>false</organismsDiffer>
    <experiments>3</experiments>
</comment>
<comment type="interaction">
    <interactant intactId="EBI-2880652">
        <id>Q08043</id>
    </interactant>
    <interactant intactId="EBI-359224">
        <id>Q13077</id>
        <label>TRAF1</label>
    </interactant>
    <organismsDiffer>false</organismsDiffer>
    <experiments>3</experiments>
</comment>
<comment type="interaction">
    <interactant intactId="EBI-2880652">
        <id>Q08043</id>
    </interactant>
    <interactant intactId="EBI-702370">
        <id>Q14134</id>
        <label>TRIM29</label>
    </interactant>
    <organismsDiffer>false</organismsDiffer>
    <experiments>3</experiments>
</comment>
<comment type="interaction">
    <interactant intactId="EBI-2880652">
        <id>Q08043</id>
    </interactant>
    <interactant intactId="EBI-743272">
        <id>O75604</id>
        <label>USP2</label>
    </interactant>
    <organismsDiffer>false</organismsDiffer>
    <experiments>3</experiments>
</comment>
<comment type="interaction">
    <interactant intactId="EBI-2880652">
        <id>Q08043</id>
    </interactant>
    <interactant intactId="EBI-10252492">
        <id>Q6P1L6</id>
        <label>ZNF343</label>
    </interactant>
    <organismsDiffer>false</organismsDiffer>
    <experiments>3</experiments>
</comment>
<comment type="interaction">
    <interactant intactId="EBI-2880652">
        <id>Q08043</id>
    </interactant>
    <interactant intactId="EBI-743265">
        <id>Q9BUY5</id>
        <label>ZNF426</label>
    </interactant>
    <organismsDiffer>false</organismsDiffer>
    <experiments>3</experiments>
</comment>
<comment type="tissue specificity">
    <text evidence="3 5">Expression restricted to fast (type 2) skeletal muscle fibers (at protein level).</text>
</comment>
<comment type="polymorphism">
    <text evidence="3 5 6 9 10 11 12">A common variant at position 577 creates a stop codon at position 577, leading to ACTN3 deficiency (PubMed:10192379). The presence of this variant is not associated with any disease phenotype [MIM:617749] (PubMed:11440986). It has a global frequency of almost 44% in the human population according to the Genome Aggregation Database (gnomAD v4.1.0). It is thought that the variant p.Arg577Ter became more frequent as humans migrated out of Africa into the colder climates of central and northern Europe, as individuals carrying this variant are superior in maintaining core body temperature during cold-water immersion due to changes in skeletal muscle thermogenesis (PubMed:33600773). The variant p.Arg577Ter at the homozygous state is underrepresented in elite sprint/power athletes and overrepresented in endurance athletes, suggesting that ACT3 deficiency increases muscle endurance at the cost of power generation (PubMed:12879365, PubMed:15886711, PubMed:18043716, PubMed:29706347).</text>
</comment>
<comment type="similarity">
    <text evidence="13">Belongs to the alpha-actinin family.</text>
</comment>
<proteinExistence type="evidence at protein level"/>
<protein>
    <recommendedName>
        <fullName>Alpha-actinin-3</fullName>
    </recommendedName>
    <alternativeName>
        <fullName>Alpha-actinin skeletal muscle isoform 3</fullName>
    </alternativeName>
    <alternativeName>
        <fullName>F-actin cross-linking protein</fullName>
    </alternativeName>
</protein>
<organism>
    <name type="scientific">Homo sapiens</name>
    <name type="common">Human</name>
    <dbReference type="NCBI Taxonomy" id="9606"/>
    <lineage>
        <taxon>Eukaryota</taxon>
        <taxon>Metazoa</taxon>
        <taxon>Chordata</taxon>
        <taxon>Craniata</taxon>
        <taxon>Vertebrata</taxon>
        <taxon>Euteleostomi</taxon>
        <taxon>Mammalia</taxon>
        <taxon>Eutheria</taxon>
        <taxon>Euarchontoglires</taxon>
        <taxon>Primates</taxon>
        <taxon>Haplorrhini</taxon>
        <taxon>Catarrhini</taxon>
        <taxon>Hominidae</taxon>
        <taxon>Homo</taxon>
    </lineage>
</organism>
<dbReference type="EMBL" id="M86407">
    <property type="protein sequence ID" value="AAA51585.1"/>
    <property type="molecule type" value="mRNA"/>
</dbReference>
<dbReference type="EMBL" id="AP002748">
    <property type="status" value="NOT_ANNOTATED_CDS"/>
    <property type="molecule type" value="Genomic_DNA"/>
</dbReference>
<dbReference type="EMBL" id="BC099647">
    <property type="protein sequence ID" value="AAH99647.1"/>
    <property type="molecule type" value="mRNA"/>
</dbReference>
<dbReference type="EMBL" id="BC099649">
    <property type="protein sequence ID" value="AAH99649.1"/>
    <property type="molecule type" value="mRNA"/>
</dbReference>
<dbReference type="CCDS" id="CCDS53663.1"/>
<dbReference type="PIR" id="B40199">
    <property type="entry name" value="FAHUA3"/>
</dbReference>
<dbReference type="RefSeq" id="NP_001095.2">
    <property type="nucleotide sequence ID" value="NM_001104.4"/>
</dbReference>
<dbReference type="RefSeq" id="NP_001245300.2">
    <property type="nucleotide sequence ID" value="NM_001258371.2"/>
</dbReference>
<dbReference type="PDB" id="1TJT">
    <property type="method" value="X-ray"/>
    <property type="resolution" value="2.19 A"/>
    <property type="chains" value="A=26-273"/>
</dbReference>
<dbReference type="PDB" id="1WKU">
    <property type="method" value="X-ray"/>
    <property type="resolution" value="1.60 A"/>
    <property type="chains" value="A/B=26-273"/>
</dbReference>
<dbReference type="PDB" id="3LUE">
    <property type="method" value="EM"/>
    <property type="chains" value="K/L/M/N/O/P/Q/R/S/T=42-150"/>
</dbReference>
<dbReference type="PDBsum" id="1TJT"/>
<dbReference type="PDBsum" id="1WKU"/>
<dbReference type="PDBsum" id="3LUE"/>
<dbReference type="EMDB" id="EMD-5170"/>
<dbReference type="SMR" id="Q08043"/>
<dbReference type="BioGRID" id="106604">
    <property type="interactions" value="103"/>
</dbReference>
<dbReference type="FunCoup" id="Q08043">
    <property type="interactions" value="299"/>
</dbReference>
<dbReference type="IntAct" id="Q08043">
    <property type="interactions" value="76"/>
</dbReference>
<dbReference type="MINT" id="Q08043"/>
<dbReference type="STRING" id="9606.ENSP00000422007"/>
<dbReference type="GlyGen" id="Q08043">
    <property type="glycosylation" value="1 site, 1 O-linked glycan (1 site)"/>
</dbReference>
<dbReference type="iPTMnet" id="Q08043"/>
<dbReference type="PhosphoSitePlus" id="Q08043"/>
<dbReference type="SwissPalm" id="Q08043"/>
<dbReference type="BioMuta" id="ACTN3"/>
<dbReference type="DMDM" id="215273967"/>
<dbReference type="jPOST" id="Q08043"/>
<dbReference type="MassIVE" id="Q08043"/>
<dbReference type="PaxDb" id="9606-ENSP00000422007"/>
<dbReference type="PeptideAtlas" id="Q08043"/>
<dbReference type="PRIDE" id="Q08043"/>
<dbReference type="ProteomicsDB" id="58566"/>
<dbReference type="Pumba" id="Q08043"/>
<dbReference type="Antibodypedia" id="73518">
    <property type="antibodies" value="259 antibodies from 30 providers"/>
</dbReference>
<dbReference type="DNASU" id="89"/>
<dbReference type="Ensembl" id="ENST00000513398.2">
    <property type="protein sequence ID" value="ENSP00000426797.1"/>
    <property type="gene ID" value="ENSG00000248746.6"/>
</dbReference>
<dbReference type="GeneID" id="89"/>
<dbReference type="KEGG" id="hsa:89"/>
<dbReference type="MANE-Select" id="ENST00000513398.2">
    <property type="protein sequence ID" value="ENSP00000426797.1"/>
    <property type="RefSeq nucleotide sequence ID" value="NM_001104.4"/>
    <property type="RefSeq protein sequence ID" value="NP_001095.2"/>
</dbReference>
<dbReference type="UCSC" id="uc021qlz.4">
    <property type="organism name" value="human"/>
</dbReference>
<dbReference type="AGR" id="HGNC:165"/>
<dbReference type="CTD" id="89"/>
<dbReference type="DisGeNET" id="89"/>
<dbReference type="GeneCards" id="ACTN3"/>
<dbReference type="HGNC" id="HGNC:165">
    <property type="gene designation" value="ACTN3"/>
</dbReference>
<dbReference type="HPA" id="ENSG00000248746">
    <property type="expression patterns" value="Tissue enriched (skeletal)"/>
</dbReference>
<dbReference type="MalaCards" id="ACTN3"/>
<dbReference type="MIM" id="102574">
    <property type="type" value="gene"/>
</dbReference>
<dbReference type="MIM" id="617749">
    <property type="type" value="phenotype"/>
</dbReference>
<dbReference type="neXtProt" id="NX_Q08043"/>
<dbReference type="OpenTargets" id="ENSG00000248746"/>
<dbReference type="PharmGKB" id="PA24485"/>
<dbReference type="VEuPathDB" id="HostDB:ENSG00000248746"/>
<dbReference type="eggNOG" id="KOG0035">
    <property type="taxonomic scope" value="Eukaryota"/>
</dbReference>
<dbReference type="GeneTree" id="ENSGT00940000153968"/>
<dbReference type="HOGENOM" id="CLU_005217_1_1_1"/>
<dbReference type="InParanoid" id="Q08043"/>
<dbReference type="OMA" id="YNHSYMV"/>
<dbReference type="OrthoDB" id="10017054at2759"/>
<dbReference type="PAN-GO" id="Q08043">
    <property type="GO annotations" value="8 GO annotations based on evolutionary models"/>
</dbReference>
<dbReference type="PhylomeDB" id="Q08043"/>
<dbReference type="PathwayCommons" id="Q08043"/>
<dbReference type="Reactome" id="R-HSA-373753">
    <property type="pathway name" value="Nephrin family interactions"/>
</dbReference>
<dbReference type="Reactome" id="R-HSA-390522">
    <property type="pathway name" value="Striated Muscle Contraction"/>
</dbReference>
<dbReference type="SignaLink" id="Q08043"/>
<dbReference type="BioGRID-ORCS" id="89">
    <property type="hits" value="7 hits in 233 CRISPR screens"/>
</dbReference>
<dbReference type="ChiTaRS" id="ACTN3">
    <property type="organism name" value="human"/>
</dbReference>
<dbReference type="EvolutionaryTrace" id="Q08043"/>
<dbReference type="GeneWiki" id="ACTN3"/>
<dbReference type="GenomeRNAi" id="89"/>
<dbReference type="Pharos" id="Q08043">
    <property type="development level" value="Tbio"/>
</dbReference>
<dbReference type="PRO" id="PR:Q08043"/>
<dbReference type="Proteomes" id="UP000005640">
    <property type="component" value="Chromosome 11"/>
</dbReference>
<dbReference type="RNAct" id="Q08043">
    <property type="molecule type" value="protein"/>
</dbReference>
<dbReference type="Bgee" id="ENSG00000248746">
    <property type="expression patterns" value="Expressed in skeletal muscle tissue of rectus abdominis and 100 other cell types or tissues"/>
</dbReference>
<dbReference type="ExpressionAtlas" id="Q08043">
    <property type="expression patterns" value="baseline and differential"/>
</dbReference>
<dbReference type="GO" id="GO:0005884">
    <property type="term" value="C:actin filament"/>
    <property type="evidence" value="ECO:0000304"/>
    <property type="project" value="ProtInc"/>
</dbReference>
<dbReference type="GO" id="GO:0005903">
    <property type="term" value="C:brush border"/>
    <property type="evidence" value="ECO:0007669"/>
    <property type="project" value="Ensembl"/>
</dbReference>
<dbReference type="GO" id="GO:0030054">
    <property type="term" value="C:cell junction"/>
    <property type="evidence" value="ECO:0000318"/>
    <property type="project" value="GO_Central"/>
</dbReference>
<dbReference type="GO" id="GO:0042995">
    <property type="term" value="C:cell projection"/>
    <property type="evidence" value="ECO:0000318"/>
    <property type="project" value="GO_Central"/>
</dbReference>
<dbReference type="GO" id="GO:0030864">
    <property type="term" value="C:cortical actin cytoskeleton"/>
    <property type="evidence" value="ECO:0000318"/>
    <property type="project" value="GO_Central"/>
</dbReference>
<dbReference type="GO" id="GO:0005829">
    <property type="term" value="C:cytosol"/>
    <property type="evidence" value="ECO:0000304"/>
    <property type="project" value="Reactome"/>
</dbReference>
<dbReference type="GO" id="GO:0070062">
    <property type="term" value="C:extracellular exosome"/>
    <property type="evidence" value="ECO:0007005"/>
    <property type="project" value="UniProtKB"/>
</dbReference>
<dbReference type="GO" id="GO:0005925">
    <property type="term" value="C:focal adhesion"/>
    <property type="evidence" value="ECO:0000315"/>
    <property type="project" value="UniProtKB"/>
</dbReference>
<dbReference type="GO" id="GO:0005886">
    <property type="term" value="C:plasma membrane"/>
    <property type="evidence" value="ECO:0000318"/>
    <property type="project" value="GO_Central"/>
</dbReference>
<dbReference type="GO" id="GO:0031143">
    <property type="term" value="C:pseudopodium"/>
    <property type="evidence" value="ECO:0000304"/>
    <property type="project" value="UniProtKB"/>
</dbReference>
<dbReference type="GO" id="GO:0030018">
    <property type="term" value="C:Z disc"/>
    <property type="evidence" value="ECO:0000318"/>
    <property type="project" value="GO_Central"/>
</dbReference>
<dbReference type="GO" id="GO:0051015">
    <property type="term" value="F:actin filament binding"/>
    <property type="evidence" value="ECO:0000318"/>
    <property type="project" value="GO_Central"/>
</dbReference>
<dbReference type="GO" id="GO:0005509">
    <property type="term" value="F:calcium ion binding"/>
    <property type="evidence" value="ECO:0007669"/>
    <property type="project" value="InterPro"/>
</dbReference>
<dbReference type="GO" id="GO:0042802">
    <property type="term" value="F:identical protein binding"/>
    <property type="evidence" value="ECO:0000353"/>
    <property type="project" value="IntAct"/>
</dbReference>
<dbReference type="GO" id="GO:0005178">
    <property type="term" value="F:integrin binding"/>
    <property type="evidence" value="ECO:0000304"/>
    <property type="project" value="UniProtKB"/>
</dbReference>
<dbReference type="GO" id="GO:0008307">
    <property type="term" value="F:structural constituent of muscle"/>
    <property type="evidence" value="ECO:0000304"/>
    <property type="project" value="ProtInc"/>
</dbReference>
<dbReference type="GO" id="GO:0044325">
    <property type="term" value="F:transmembrane transporter binding"/>
    <property type="evidence" value="ECO:0000353"/>
    <property type="project" value="UniProtKB"/>
</dbReference>
<dbReference type="GO" id="GO:0030036">
    <property type="term" value="P:actin cytoskeleton organization"/>
    <property type="evidence" value="ECO:0000318"/>
    <property type="project" value="GO_Central"/>
</dbReference>
<dbReference type="GO" id="GO:0060349">
    <property type="term" value="P:bone morphogenesis"/>
    <property type="evidence" value="ECO:0007669"/>
    <property type="project" value="Ensembl"/>
</dbReference>
<dbReference type="GO" id="GO:0048041">
    <property type="term" value="P:focal adhesion assembly"/>
    <property type="evidence" value="ECO:0000315"/>
    <property type="project" value="UniProtKB"/>
</dbReference>
<dbReference type="GO" id="GO:0055001">
    <property type="term" value="P:muscle cell development"/>
    <property type="evidence" value="ECO:0000318"/>
    <property type="project" value="GO_Central"/>
</dbReference>
<dbReference type="GO" id="GO:0070885">
    <property type="term" value="P:negative regulation of calcineurin-NFAT signaling cascade"/>
    <property type="evidence" value="ECO:0000250"/>
    <property type="project" value="UniProtKB"/>
</dbReference>
<dbReference type="GO" id="GO:0120163">
    <property type="term" value="P:negative regulation of cold-induced thermogenesis"/>
    <property type="evidence" value="ECO:0000250"/>
    <property type="project" value="YuBioLab"/>
</dbReference>
<dbReference type="GO" id="GO:0045820">
    <property type="term" value="P:negative regulation of glycolytic process"/>
    <property type="evidence" value="ECO:0000250"/>
    <property type="project" value="UniProtKB"/>
</dbReference>
<dbReference type="GO" id="GO:0090324">
    <property type="term" value="P:negative regulation of oxidative phosphorylation"/>
    <property type="evidence" value="ECO:0000250"/>
    <property type="project" value="UniProtKB"/>
</dbReference>
<dbReference type="GO" id="GO:1901078">
    <property type="term" value="P:negative regulation of relaxation of muscle"/>
    <property type="evidence" value="ECO:0007669"/>
    <property type="project" value="Ensembl"/>
</dbReference>
<dbReference type="GO" id="GO:1900159">
    <property type="term" value="P:positive regulation of bone mineralization involved in bone maturation"/>
    <property type="evidence" value="ECO:0007669"/>
    <property type="project" value="Ensembl"/>
</dbReference>
<dbReference type="GO" id="GO:0031448">
    <property type="term" value="P:positive regulation of fast-twitch skeletal muscle fiber contraction"/>
    <property type="evidence" value="ECO:0007669"/>
    <property type="project" value="Ensembl"/>
</dbReference>
<dbReference type="GO" id="GO:1904025">
    <property type="term" value="P:positive regulation of glucose catabolic process to lactate via pyruvate"/>
    <property type="evidence" value="ECO:0000250"/>
    <property type="project" value="UniProtKB"/>
</dbReference>
<dbReference type="GO" id="GO:0048743">
    <property type="term" value="P:positive regulation of skeletal muscle fiber development"/>
    <property type="evidence" value="ECO:0007669"/>
    <property type="project" value="Ensembl"/>
</dbReference>
<dbReference type="GO" id="GO:0048633">
    <property type="term" value="P:positive regulation of skeletal muscle tissue growth"/>
    <property type="evidence" value="ECO:0000250"/>
    <property type="project" value="UniProtKB"/>
</dbReference>
<dbReference type="GO" id="GO:1903715">
    <property type="term" value="P:regulation of aerobic respiration"/>
    <property type="evidence" value="ECO:0000250"/>
    <property type="project" value="UniProtKB"/>
</dbReference>
<dbReference type="GO" id="GO:0042981">
    <property type="term" value="P:regulation of apoptotic process"/>
    <property type="evidence" value="ECO:0000303"/>
    <property type="project" value="UniProtKB"/>
</dbReference>
<dbReference type="GO" id="GO:0014728">
    <property type="term" value="P:regulation of the force of skeletal muscle contraction"/>
    <property type="evidence" value="ECO:0000250"/>
    <property type="project" value="UniProtKB"/>
</dbReference>
<dbReference type="GO" id="GO:0014894">
    <property type="term" value="P:response to denervation involved in regulation of muscle adaptation"/>
    <property type="evidence" value="ECO:0000250"/>
    <property type="project" value="UniProtKB"/>
</dbReference>
<dbReference type="GO" id="GO:0014732">
    <property type="term" value="P:skeletal muscle atrophy"/>
    <property type="evidence" value="ECO:0000250"/>
    <property type="project" value="UniProtKB"/>
</dbReference>
<dbReference type="GO" id="GO:0014883">
    <property type="term" value="P:transition between fast and slow fiber"/>
    <property type="evidence" value="ECO:0000250"/>
    <property type="project" value="UniProtKB"/>
</dbReference>
<dbReference type="CDD" id="cd21214">
    <property type="entry name" value="CH_ACTN_rpt1"/>
    <property type="match status" value="1"/>
</dbReference>
<dbReference type="CDD" id="cd21216">
    <property type="entry name" value="CH_ACTN_rpt2"/>
    <property type="match status" value="1"/>
</dbReference>
<dbReference type="CDD" id="cd00051">
    <property type="entry name" value="EFh"/>
    <property type="match status" value="1"/>
</dbReference>
<dbReference type="CDD" id="cd00176">
    <property type="entry name" value="SPEC"/>
    <property type="match status" value="3"/>
</dbReference>
<dbReference type="FunFam" id="1.10.238.10:FF:000004">
    <property type="entry name" value="Actinin alpha 1"/>
    <property type="match status" value="1"/>
</dbReference>
<dbReference type="FunFam" id="1.10.418.10:FF:000001">
    <property type="entry name" value="Actinin alpha 1"/>
    <property type="match status" value="1"/>
</dbReference>
<dbReference type="FunFam" id="1.20.58.60:FF:000004">
    <property type="entry name" value="Actinin alpha 1"/>
    <property type="match status" value="1"/>
</dbReference>
<dbReference type="FunFam" id="1.20.58.60:FF:000005">
    <property type="entry name" value="Actinin alpha 1"/>
    <property type="match status" value="1"/>
</dbReference>
<dbReference type="FunFam" id="1.10.238.10:FF:000156">
    <property type="entry name" value="Actinin alpha 4"/>
    <property type="match status" value="1"/>
</dbReference>
<dbReference type="FunFam" id="1.10.418.10:FF:000005">
    <property type="entry name" value="Actinin alpha 4"/>
    <property type="match status" value="1"/>
</dbReference>
<dbReference type="FunFam" id="1.20.58.60:FF:000002">
    <property type="entry name" value="Actinin, alpha 1"/>
    <property type="match status" value="1"/>
</dbReference>
<dbReference type="FunFam" id="1.20.58.60:FF:000003">
    <property type="entry name" value="Actinin, alpha 1"/>
    <property type="match status" value="1"/>
</dbReference>
<dbReference type="Gene3D" id="1.20.58.60">
    <property type="match status" value="4"/>
</dbReference>
<dbReference type="Gene3D" id="1.10.418.10">
    <property type="entry name" value="Calponin-like domain"/>
    <property type="match status" value="2"/>
</dbReference>
<dbReference type="Gene3D" id="1.10.238.10">
    <property type="entry name" value="EF-hand"/>
    <property type="match status" value="2"/>
</dbReference>
<dbReference type="InterPro" id="IPR001589">
    <property type="entry name" value="Actinin_actin-bd_CS"/>
</dbReference>
<dbReference type="InterPro" id="IPR001715">
    <property type="entry name" value="CH_dom"/>
</dbReference>
<dbReference type="InterPro" id="IPR036872">
    <property type="entry name" value="CH_dom_sf"/>
</dbReference>
<dbReference type="InterPro" id="IPR011992">
    <property type="entry name" value="EF-hand-dom_pair"/>
</dbReference>
<dbReference type="InterPro" id="IPR014837">
    <property type="entry name" value="EF-hand_Ca_insen"/>
</dbReference>
<dbReference type="InterPro" id="IPR002048">
    <property type="entry name" value="EF_hand_dom"/>
</dbReference>
<dbReference type="InterPro" id="IPR018159">
    <property type="entry name" value="Spectrin/alpha-actinin"/>
</dbReference>
<dbReference type="InterPro" id="IPR002017">
    <property type="entry name" value="Spectrin_repeat"/>
</dbReference>
<dbReference type="PANTHER" id="PTHR11915">
    <property type="entry name" value="SPECTRIN/FILAMIN RELATED CYTOSKELETAL PROTEIN"/>
    <property type="match status" value="1"/>
</dbReference>
<dbReference type="Pfam" id="PF00307">
    <property type="entry name" value="CH"/>
    <property type="match status" value="2"/>
</dbReference>
<dbReference type="Pfam" id="PF08726">
    <property type="entry name" value="EFhand_Ca_insen"/>
    <property type="match status" value="1"/>
</dbReference>
<dbReference type="Pfam" id="PF00435">
    <property type="entry name" value="Spectrin"/>
    <property type="match status" value="4"/>
</dbReference>
<dbReference type="SMART" id="SM00033">
    <property type="entry name" value="CH"/>
    <property type="match status" value="2"/>
</dbReference>
<dbReference type="SMART" id="SM00054">
    <property type="entry name" value="EFh"/>
    <property type="match status" value="2"/>
</dbReference>
<dbReference type="SMART" id="SM01184">
    <property type="entry name" value="efhand_Ca_insen"/>
    <property type="match status" value="1"/>
</dbReference>
<dbReference type="SMART" id="SM00150">
    <property type="entry name" value="SPEC"/>
    <property type="match status" value="2"/>
</dbReference>
<dbReference type="SUPFAM" id="SSF47576">
    <property type="entry name" value="Calponin-homology domain, CH-domain"/>
    <property type="match status" value="1"/>
</dbReference>
<dbReference type="SUPFAM" id="SSF47473">
    <property type="entry name" value="EF-hand"/>
    <property type="match status" value="1"/>
</dbReference>
<dbReference type="SUPFAM" id="SSF46966">
    <property type="entry name" value="Spectrin repeat"/>
    <property type="match status" value="4"/>
</dbReference>
<dbReference type="PROSITE" id="PS00019">
    <property type="entry name" value="ACTININ_1"/>
    <property type="match status" value="1"/>
</dbReference>
<dbReference type="PROSITE" id="PS00020">
    <property type="entry name" value="ACTININ_2"/>
    <property type="match status" value="1"/>
</dbReference>
<dbReference type="PROSITE" id="PS50021">
    <property type="entry name" value="CH"/>
    <property type="match status" value="2"/>
</dbReference>
<dbReference type="PROSITE" id="PS50222">
    <property type="entry name" value="EF_HAND_2"/>
    <property type="match status" value="2"/>
</dbReference>
<gene>
    <name type="primary">ACTN3</name>
</gene>